<protein>
    <recommendedName>
        <fullName>Glycosyltransferase 6 domain-containing protein 1</fullName>
        <ecNumber>2.4.1.-</ecNumber>
    </recommendedName>
</protein>
<reference key="1">
    <citation type="journal article" date="2004" name="Nature">
        <title>Genome sequence of the Brown Norway rat yields insights into mammalian evolution.</title>
        <authorList>
            <person name="Gibbs R.A."/>
            <person name="Weinstock G.M."/>
            <person name="Metzker M.L."/>
            <person name="Muzny D.M."/>
            <person name="Sodergren E.J."/>
            <person name="Scherer S."/>
            <person name="Scott G."/>
            <person name="Steffen D."/>
            <person name="Worley K.C."/>
            <person name="Burch P.E."/>
            <person name="Okwuonu G."/>
            <person name="Hines S."/>
            <person name="Lewis L."/>
            <person name="Deramo C."/>
            <person name="Delgado O."/>
            <person name="Dugan-Rocha S."/>
            <person name="Miner G."/>
            <person name="Morgan M."/>
            <person name="Hawes A."/>
            <person name="Gill R."/>
            <person name="Holt R.A."/>
            <person name="Adams M.D."/>
            <person name="Amanatides P.G."/>
            <person name="Baden-Tillson H."/>
            <person name="Barnstead M."/>
            <person name="Chin S."/>
            <person name="Evans C.A."/>
            <person name="Ferriera S."/>
            <person name="Fosler C."/>
            <person name="Glodek A."/>
            <person name="Gu Z."/>
            <person name="Jennings D."/>
            <person name="Kraft C.L."/>
            <person name="Nguyen T."/>
            <person name="Pfannkoch C.M."/>
            <person name="Sitter C."/>
            <person name="Sutton G.G."/>
            <person name="Venter J.C."/>
            <person name="Woodage T."/>
            <person name="Smith D."/>
            <person name="Lee H.-M."/>
            <person name="Gustafson E."/>
            <person name="Cahill P."/>
            <person name="Kana A."/>
            <person name="Doucette-Stamm L."/>
            <person name="Weinstock K."/>
            <person name="Fechtel K."/>
            <person name="Weiss R.B."/>
            <person name="Dunn D.M."/>
            <person name="Green E.D."/>
            <person name="Blakesley R.W."/>
            <person name="Bouffard G.G."/>
            <person name="De Jong P.J."/>
            <person name="Osoegawa K."/>
            <person name="Zhu B."/>
            <person name="Marra M."/>
            <person name="Schein J."/>
            <person name="Bosdet I."/>
            <person name="Fjell C."/>
            <person name="Jones S."/>
            <person name="Krzywinski M."/>
            <person name="Mathewson C."/>
            <person name="Siddiqui A."/>
            <person name="Wye N."/>
            <person name="McPherson J."/>
            <person name="Zhao S."/>
            <person name="Fraser C.M."/>
            <person name="Shetty J."/>
            <person name="Shatsman S."/>
            <person name="Geer K."/>
            <person name="Chen Y."/>
            <person name="Abramzon S."/>
            <person name="Nierman W.C."/>
            <person name="Havlak P.H."/>
            <person name="Chen R."/>
            <person name="Durbin K.J."/>
            <person name="Egan A."/>
            <person name="Ren Y."/>
            <person name="Song X.-Z."/>
            <person name="Li B."/>
            <person name="Liu Y."/>
            <person name="Qin X."/>
            <person name="Cawley S."/>
            <person name="Cooney A.J."/>
            <person name="D'Souza L.M."/>
            <person name="Martin K."/>
            <person name="Wu J.Q."/>
            <person name="Gonzalez-Garay M.L."/>
            <person name="Jackson A.R."/>
            <person name="Kalafus K.J."/>
            <person name="McLeod M.P."/>
            <person name="Milosavljevic A."/>
            <person name="Virk D."/>
            <person name="Volkov A."/>
            <person name="Wheeler D.A."/>
            <person name="Zhang Z."/>
            <person name="Bailey J.A."/>
            <person name="Eichler E.E."/>
            <person name="Tuzun E."/>
            <person name="Birney E."/>
            <person name="Mongin E."/>
            <person name="Ureta-Vidal A."/>
            <person name="Woodwark C."/>
            <person name="Zdobnov E."/>
            <person name="Bork P."/>
            <person name="Suyama M."/>
            <person name="Torrents D."/>
            <person name="Alexandersson M."/>
            <person name="Trask B.J."/>
            <person name="Young J.M."/>
            <person name="Huang H."/>
            <person name="Wang H."/>
            <person name="Xing H."/>
            <person name="Daniels S."/>
            <person name="Gietzen D."/>
            <person name="Schmidt J."/>
            <person name="Stevens K."/>
            <person name="Vitt U."/>
            <person name="Wingrove J."/>
            <person name="Camara F."/>
            <person name="Mar Alba M."/>
            <person name="Abril J.F."/>
            <person name="Guigo R."/>
            <person name="Smit A."/>
            <person name="Dubchak I."/>
            <person name="Rubin E.M."/>
            <person name="Couronne O."/>
            <person name="Poliakov A."/>
            <person name="Huebner N."/>
            <person name="Ganten D."/>
            <person name="Goesele C."/>
            <person name="Hummel O."/>
            <person name="Kreitler T."/>
            <person name="Lee Y.-A."/>
            <person name="Monti J."/>
            <person name="Schulz H."/>
            <person name="Zimdahl H."/>
            <person name="Himmelbauer H."/>
            <person name="Lehrach H."/>
            <person name="Jacob H.J."/>
            <person name="Bromberg S."/>
            <person name="Gullings-Handley J."/>
            <person name="Jensen-Seaman M.I."/>
            <person name="Kwitek A.E."/>
            <person name="Lazar J."/>
            <person name="Pasko D."/>
            <person name="Tonellato P.J."/>
            <person name="Twigger S."/>
            <person name="Ponting C.P."/>
            <person name="Duarte J.M."/>
            <person name="Rice S."/>
            <person name="Goodstadt L."/>
            <person name="Beatson S.A."/>
            <person name="Emes R.D."/>
            <person name="Winter E.E."/>
            <person name="Webber C."/>
            <person name="Brandt P."/>
            <person name="Nyakatura G."/>
            <person name="Adetobi M."/>
            <person name="Chiaromonte F."/>
            <person name="Elnitski L."/>
            <person name="Eswara P."/>
            <person name="Hardison R.C."/>
            <person name="Hou M."/>
            <person name="Kolbe D."/>
            <person name="Makova K."/>
            <person name="Miller W."/>
            <person name="Nekrutenko A."/>
            <person name="Riemer C."/>
            <person name="Schwartz S."/>
            <person name="Taylor J."/>
            <person name="Yang S."/>
            <person name="Zhang Y."/>
            <person name="Lindpaintner K."/>
            <person name="Andrews T.D."/>
            <person name="Caccamo M."/>
            <person name="Clamp M."/>
            <person name="Clarke L."/>
            <person name="Curwen V."/>
            <person name="Durbin R.M."/>
            <person name="Eyras E."/>
            <person name="Searle S.M."/>
            <person name="Cooper G.M."/>
            <person name="Batzoglou S."/>
            <person name="Brudno M."/>
            <person name="Sidow A."/>
            <person name="Stone E.A."/>
            <person name="Payseur B.A."/>
            <person name="Bourque G."/>
            <person name="Lopez-Otin C."/>
            <person name="Puente X.S."/>
            <person name="Chakrabarti K."/>
            <person name="Chatterji S."/>
            <person name="Dewey C."/>
            <person name="Pachter L."/>
            <person name="Bray N."/>
            <person name="Yap V.B."/>
            <person name="Caspi A."/>
            <person name="Tesler G."/>
            <person name="Pevzner P.A."/>
            <person name="Haussler D."/>
            <person name="Roskin K.M."/>
            <person name="Baertsch R."/>
            <person name="Clawson H."/>
            <person name="Furey T.S."/>
            <person name="Hinrichs A.S."/>
            <person name="Karolchik D."/>
            <person name="Kent W.J."/>
            <person name="Rosenbloom K.R."/>
            <person name="Trumbower H."/>
            <person name="Weirauch M."/>
            <person name="Cooper D.N."/>
            <person name="Stenson P.D."/>
            <person name="Ma B."/>
            <person name="Brent M."/>
            <person name="Arumugam M."/>
            <person name="Shteynberg D."/>
            <person name="Copley R.R."/>
            <person name="Taylor M.S."/>
            <person name="Riethman H."/>
            <person name="Mudunuri U."/>
            <person name="Peterson J."/>
            <person name="Guyer M."/>
            <person name="Felsenfeld A."/>
            <person name="Old S."/>
            <person name="Mockrin S."/>
            <person name="Collins F.S."/>
        </authorList>
    </citation>
    <scope>NUCLEOTIDE SEQUENCE [LARGE SCALE GENOMIC DNA]</scope>
    <source>
        <strain>Brown Norway</strain>
    </source>
</reference>
<comment type="cofactor">
    <cofactor evidence="1">
        <name>Mn(2+)</name>
        <dbReference type="ChEBI" id="CHEBI:29035"/>
    </cofactor>
    <text evidence="1">Binds 1 Mn(2+) ion per subunit.</text>
</comment>
<comment type="subcellular location">
    <subcellularLocation>
        <location evidence="3">Membrane</location>
        <topology evidence="3">Single-pass type II membrane protein</topology>
    </subcellularLocation>
</comment>
<comment type="similarity">
    <text evidence="3">Belongs to the glycosyltransferase 6 family.</text>
</comment>
<organism>
    <name type="scientific">Rattus norvegicus</name>
    <name type="common">Rat</name>
    <dbReference type="NCBI Taxonomy" id="10116"/>
    <lineage>
        <taxon>Eukaryota</taxon>
        <taxon>Metazoa</taxon>
        <taxon>Chordata</taxon>
        <taxon>Craniata</taxon>
        <taxon>Vertebrata</taxon>
        <taxon>Euteleostomi</taxon>
        <taxon>Mammalia</taxon>
        <taxon>Eutheria</taxon>
        <taxon>Euarchontoglires</taxon>
        <taxon>Glires</taxon>
        <taxon>Rodentia</taxon>
        <taxon>Myomorpha</taxon>
        <taxon>Muroidea</taxon>
        <taxon>Muridae</taxon>
        <taxon>Murinae</taxon>
        <taxon>Rattus</taxon>
    </lineage>
</organism>
<evidence type="ECO:0000250" key="1">
    <source>
        <dbReference type="UniProtKB" id="P14769"/>
    </source>
</evidence>
<evidence type="ECO:0000255" key="2"/>
<evidence type="ECO:0000305" key="3"/>
<proteinExistence type="inferred from homology"/>
<name>GL6D1_RAT</name>
<accession>D3ZNQ3</accession>
<feature type="chain" id="PRO_0000413625" description="Glycosyltransferase 6 domain-containing protein 1">
    <location>
        <begin position="1"/>
        <end position="311"/>
    </location>
</feature>
<feature type="topological domain" description="Cytoplasmic" evidence="2">
    <location>
        <begin position="1"/>
        <end position="5"/>
    </location>
</feature>
<feature type="transmembrane region" description="Helical; Signal-anchor for type II membrane protein" evidence="2">
    <location>
        <begin position="6"/>
        <end position="26"/>
    </location>
</feature>
<feature type="topological domain" description="Lumenal" evidence="2">
    <location>
        <begin position="27"/>
        <end position="311"/>
    </location>
</feature>
<feature type="active site" description="Nucleophile" evidence="1">
    <location>
        <position position="266"/>
    </location>
</feature>
<feature type="binding site" evidence="1">
    <location>
        <begin position="85"/>
        <end position="90"/>
    </location>
    <ligand>
        <name>substrate</name>
    </ligand>
</feature>
<feature type="binding site" evidence="1">
    <location>
        <begin position="176"/>
        <end position="178"/>
    </location>
    <ligand>
        <name>substrate</name>
    </ligand>
</feature>
<feature type="binding site" evidence="1">
    <location>
        <begin position="198"/>
        <end position="201"/>
    </location>
    <ligand>
        <name>substrate</name>
    </ligand>
</feature>
<feature type="glycosylation site" description="N-linked (GlcNAc...) asparagine" evidence="2">
    <location>
        <position position="77"/>
    </location>
</feature>
<keyword id="KW-0325">Glycoprotein</keyword>
<keyword id="KW-0328">Glycosyltransferase</keyword>
<keyword id="KW-0472">Membrane</keyword>
<keyword id="KW-1185">Reference proteome</keyword>
<keyword id="KW-0735">Signal-anchor</keyword>
<keyword id="KW-0808">Transferase</keyword>
<keyword id="KW-0812">Transmembrane</keyword>
<keyword id="KW-1133">Transmembrane helix</keyword>
<gene>
    <name type="primary">Glt6d1</name>
</gene>
<dbReference type="EC" id="2.4.1.-"/>
<dbReference type="EMBL" id="AABR03025845">
    <property type="status" value="NOT_ANNOTATED_CDS"/>
    <property type="molecule type" value="Genomic_DNA"/>
</dbReference>
<dbReference type="EMBL" id="AABR03026226">
    <property type="status" value="NOT_ANNOTATED_CDS"/>
    <property type="molecule type" value="Genomic_DNA"/>
</dbReference>
<dbReference type="EMBL" id="AABR03031805">
    <property type="status" value="NOT_ANNOTATED_CDS"/>
    <property type="molecule type" value="Genomic_DNA"/>
</dbReference>
<dbReference type="RefSeq" id="NP_001100029.2">
    <property type="nucleotide sequence ID" value="NM_001106559.2"/>
</dbReference>
<dbReference type="RefSeq" id="XP_006233733.1">
    <property type="nucleotide sequence ID" value="XM_006233671.5"/>
</dbReference>
<dbReference type="SMR" id="D3ZNQ3"/>
<dbReference type="STRING" id="10116.ENSRNOP00000034274"/>
<dbReference type="GlyCosmos" id="D3ZNQ3">
    <property type="glycosylation" value="1 site, No reported glycans"/>
</dbReference>
<dbReference type="GlyGen" id="D3ZNQ3">
    <property type="glycosylation" value="1 site"/>
</dbReference>
<dbReference type="PhosphoSitePlus" id="D3ZNQ3"/>
<dbReference type="PaxDb" id="10116-ENSRNOP00000034274"/>
<dbReference type="Ensembl" id="ENSRNOT00000034538.6">
    <property type="protein sequence ID" value="ENSRNOP00000034274.4"/>
    <property type="gene ID" value="ENSRNOG00000027900.6"/>
</dbReference>
<dbReference type="GeneID" id="296577"/>
<dbReference type="KEGG" id="rno:296577"/>
<dbReference type="UCSC" id="RGD:1311348">
    <property type="organism name" value="rat"/>
</dbReference>
<dbReference type="AGR" id="RGD:1311348"/>
<dbReference type="CTD" id="360203"/>
<dbReference type="RGD" id="1311348">
    <property type="gene designation" value="Glt6d1"/>
</dbReference>
<dbReference type="eggNOG" id="ENOG502RU0J">
    <property type="taxonomic scope" value="Eukaryota"/>
</dbReference>
<dbReference type="GeneTree" id="ENSGT00950000182858"/>
<dbReference type="HOGENOM" id="CLU_062445_1_0_1"/>
<dbReference type="InParanoid" id="D3ZNQ3"/>
<dbReference type="OMA" id="WLAPILW"/>
<dbReference type="OrthoDB" id="24012at9989"/>
<dbReference type="PhylomeDB" id="D3ZNQ3"/>
<dbReference type="TreeFam" id="TF330991"/>
<dbReference type="PRO" id="PR:D3ZNQ3"/>
<dbReference type="Proteomes" id="UP000002494">
    <property type="component" value="Chromosome 3"/>
</dbReference>
<dbReference type="Bgee" id="ENSRNOG00000027900">
    <property type="expression patterns" value="Expressed in testis and 3 other cell types or tissues"/>
</dbReference>
<dbReference type="GO" id="GO:0005794">
    <property type="term" value="C:Golgi apparatus"/>
    <property type="evidence" value="ECO:0000318"/>
    <property type="project" value="GO_Central"/>
</dbReference>
<dbReference type="GO" id="GO:0016020">
    <property type="term" value="C:membrane"/>
    <property type="evidence" value="ECO:0007669"/>
    <property type="project" value="UniProtKB-SubCell"/>
</dbReference>
<dbReference type="GO" id="GO:0031982">
    <property type="term" value="C:vesicle"/>
    <property type="evidence" value="ECO:0000318"/>
    <property type="project" value="GO_Central"/>
</dbReference>
<dbReference type="GO" id="GO:0016757">
    <property type="term" value="F:glycosyltransferase activity"/>
    <property type="evidence" value="ECO:0000318"/>
    <property type="project" value="GO_Central"/>
</dbReference>
<dbReference type="GO" id="GO:0016758">
    <property type="term" value="F:hexosyltransferase activity"/>
    <property type="evidence" value="ECO:0007669"/>
    <property type="project" value="InterPro"/>
</dbReference>
<dbReference type="GO" id="GO:0005975">
    <property type="term" value="P:carbohydrate metabolic process"/>
    <property type="evidence" value="ECO:0007669"/>
    <property type="project" value="InterPro"/>
</dbReference>
<dbReference type="GO" id="GO:0030259">
    <property type="term" value="P:lipid glycosylation"/>
    <property type="evidence" value="ECO:0000318"/>
    <property type="project" value="GO_Central"/>
</dbReference>
<dbReference type="FunFam" id="3.90.550.10:FF:000022">
    <property type="entry name" value="Histo-blood group ABO system transferase"/>
    <property type="match status" value="1"/>
</dbReference>
<dbReference type="Gene3D" id="3.90.550.10">
    <property type="entry name" value="Spore Coat Polysaccharide Biosynthesis Protein SpsA, Chain A"/>
    <property type="match status" value="1"/>
</dbReference>
<dbReference type="InterPro" id="IPR005076">
    <property type="entry name" value="Glyco_trans_6"/>
</dbReference>
<dbReference type="InterPro" id="IPR029044">
    <property type="entry name" value="Nucleotide-diphossugar_trans"/>
</dbReference>
<dbReference type="PANTHER" id="PTHR10462:SF27">
    <property type="entry name" value="GLYCOSYLTRANSFERASE 6 DOMAIN-CONTAINING PROTEIN 1-RELATED"/>
    <property type="match status" value="1"/>
</dbReference>
<dbReference type="PANTHER" id="PTHR10462">
    <property type="entry name" value="GLYCOSYLTRANSFERASE-RELATED"/>
    <property type="match status" value="1"/>
</dbReference>
<dbReference type="Pfam" id="PF03414">
    <property type="entry name" value="Glyco_transf_6"/>
    <property type="match status" value="1"/>
</dbReference>
<dbReference type="SUPFAM" id="SSF53448">
    <property type="entry name" value="Nucleotide-diphospho-sugar transferases"/>
    <property type="match status" value="1"/>
</dbReference>
<sequence length="311" mass="36613">MKAKGRILLLTSCLFLLLLLLAKIHLRNHQEEELPLSDWFDPRRRLDVITTTDWLAPVIWEGTFDRKVLEKYYHKQNITMGLTVFAVSSFNGQYLDPFLQSASKFFMPGYRVIFYIMVDKSLKLPEMGHNPLQSFQVLVVSQERQWSDFDLMRMTVLSKHIREHIRFEVDFLFVMSVNMVFQNVFGVETLSTSVAQLHAWWYFRKTTHLPYERRPTSAAYIPFGLGDFYYAGAIIGGVPFQVLDFTHQYLKSVILDIENGVNSTYEKYLNKYFFLNKPTKLLSPEYSWDQTFNIPQQVHYVKVAHYPTDDL</sequence>